<sequence length="91" mass="8401">MVRVGAAAAVLVLAAAAAAMAAEPPTDDGAVRVAAGLTKCVSGCGSKVTSCLLGCYGGGGGAAAAATAMPFCVIGCTSDVLSCATGCSTSL</sequence>
<reference key="1">
    <citation type="journal article" date="2002" name="Nature">
        <title>The genome sequence and structure of rice chromosome 1.</title>
        <authorList>
            <person name="Sasaki T."/>
            <person name="Matsumoto T."/>
            <person name="Yamamoto K."/>
            <person name="Sakata K."/>
            <person name="Baba T."/>
            <person name="Katayose Y."/>
            <person name="Wu J."/>
            <person name="Niimura Y."/>
            <person name="Cheng Z."/>
            <person name="Nagamura Y."/>
            <person name="Antonio B.A."/>
            <person name="Kanamori H."/>
            <person name="Hosokawa S."/>
            <person name="Masukawa M."/>
            <person name="Arikawa K."/>
            <person name="Chiden Y."/>
            <person name="Hayashi M."/>
            <person name="Okamoto M."/>
            <person name="Ando T."/>
            <person name="Aoki H."/>
            <person name="Arita K."/>
            <person name="Hamada M."/>
            <person name="Harada C."/>
            <person name="Hijishita S."/>
            <person name="Honda M."/>
            <person name="Ichikawa Y."/>
            <person name="Idonuma A."/>
            <person name="Iijima M."/>
            <person name="Ikeda M."/>
            <person name="Ikeno M."/>
            <person name="Ito S."/>
            <person name="Ito T."/>
            <person name="Ito Y."/>
            <person name="Ito Y."/>
            <person name="Iwabuchi A."/>
            <person name="Kamiya K."/>
            <person name="Karasawa W."/>
            <person name="Katagiri S."/>
            <person name="Kikuta A."/>
            <person name="Kobayashi N."/>
            <person name="Kono I."/>
            <person name="Machita K."/>
            <person name="Maehara T."/>
            <person name="Mizuno H."/>
            <person name="Mizubayashi T."/>
            <person name="Mukai Y."/>
            <person name="Nagasaki H."/>
            <person name="Nakashima M."/>
            <person name="Nakama Y."/>
            <person name="Nakamichi Y."/>
            <person name="Nakamura M."/>
            <person name="Namiki N."/>
            <person name="Negishi M."/>
            <person name="Ohta I."/>
            <person name="Ono N."/>
            <person name="Saji S."/>
            <person name="Sakai K."/>
            <person name="Shibata M."/>
            <person name="Shimokawa T."/>
            <person name="Shomura A."/>
            <person name="Song J."/>
            <person name="Takazaki Y."/>
            <person name="Terasawa K."/>
            <person name="Tsuji K."/>
            <person name="Waki K."/>
            <person name="Yamagata H."/>
            <person name="Yamane H."/>
            <person name="Yoshiki S."/>
            <person name="Yoshihara R."/>
            <person name="Yukawa K."/>
            <person name="Zhong H."/>
            <person name="Iwama H."/>
            <person name="Endo T."/>
            <person name="Ito H."/>
            <person name="Hahn J.H."/>
            <person name="Kim H.-I."/>
            <person name="Eun M.-Y."/>
            <person name="Yano M."/>
            <person name="Jiang J."/>
            <person name="Gojobori T."/>
        </authorList>
    </citation>
    <scope>NUCLEOTIDE SEQUENCE [LARGE SCALE GENOMIC DNA]</scope>
    <source>
        <strain>cv. Nipponbare</strain>
    </source>
</reference>
<reference key="2">
    <citation type="journal article" date="2005" name="Nature">
        <title>The map-based sequence of the rice genome.</title>
        <authorList>
            <consortium name="International rice genome sequencing project (IRGSP)"/>
        </authorList>
    </citation>
    <scope>NUCLEOTIDE SEQUENCE [LARGE SCALE GENOMIC DNA]</scope>
    <source>
        <strain>cv. Nipponbare</strain>
    </source>
</reference>
<reference key="3">
    <citation type="journal article" date="2008" name="Nucleic Acids Res.">
        <title>The rice annotation project database (RAP-DB): 2008 update.</title>
        <authorList>
            <consortium name="The rice annotation project (RAP)"/>
        </authorList>
    </citation>
    <scope>GENOME REANNOTATION</scope>
    <source>
        <strain>cv. Nipponbare</strain>
    </source>
</reference>
<reference key="4">
    <citation type="journal article" date="2013" name="Rice">
        <title>Improvement of the Oryza sativa Nipponbare reference genome using next generation sequence and optical map data.</title>
        <authorList>
            <person name="Kawahara Y."/>
            <person name="de la Bastide M."/>
            <person name="Hamilton J.P."/>
            <person name="Kanamori H."/>
            <person name="McCombie W.R."/>
            <person name="Ouyang S."/>
            <person name="Schwartz D.C."/>
            <person name="Tanaka T."/>
            <person name="Wu J."/>
            <person name="Zhou S."/>
            <person name="Childs K.L."/>
            <person name="Davidson R.M."/>
            <person name="Lin H."/>
            <person name="Quesada-Ocampo L."/>
            <person name="Vaillancourt B."/>
            <person name="Sakai H."/>
            <person name="Lee S.S."/>
            <person name="Kim J."/>
            <person name="Numa H."/>
            <person name="Itoh T."/>
            <person name="Buell C.R."/>
            <person name="Matsumoto T."/>
        </authorList>
    </citation>
    <scope>GENOME REANNOTATION</scope>
    <source>
        <strain>cv. Nipponbare</strain>
    </source>
</reference>
<reference key="5">
    <citation type="journal article" date="2003" name="Science">
        <title>Collection, mapping, and annotation of over 28,000 cDNA clones from japonica rice.</title>
        <authorList>
            <consortium name="The rice full-length cDNA consortium"/>
        </authorList>
    </citation>
    <scope>NUCLEOTIDE SEQUENCE [LARGE SCALE MRNA]</scope>
    <source>
        <strain>cv. Nipponbare</strain>
    </source>
</reference>
<protein>
    <recommendedName>
        <fullName evidence="3">Anther-specific protein RTS</fullName>
    </recommendedName>
    <alternativeName>
        <fullName evidence="3">Protein RICE TAPETUM-SPECIFIC</fullName>
    </alternativeName>
</protein>
<proteinExistence type="inferred from homology"/>
<evidence type="ECO:0000250" key="1">
    <source>
        <dbReference type="UniProtKB" id="Q40629"/>
    </source>
</evidence>
<evidence type="ECO:0000255" key="2"/>
<evidence type="ECO:0000305" key="3"/>
<evidence type="ECO:0000312" key="4">
    <source>
        <dbReference type="EMBL" id="BAB67924.1"/>
    </source>
</evidence>
<evidence type="ECO:0000312" key="5">
    <source>
        <dbReference type="EMBL" id="BAB90758.1"/>
    </source>
</evidence>
<evidence type="ECO:0000312" key="6">
    <source>
        <dbReference type="EMBL" id="BAF07198.1"/>
    </source>
</evidence>
<dbReference type="EMBL" id="AP003272">
    <property type="protein sequence ID" value="BAB67924.1"/>
    <property type="molecule type" value="Genomic_DNA"/>
</dbReference>
<dbReference type="EMBL" id="AP004330">
    <property type="protein sequence ID" value="BAB90758.1"/>
    <property type="molecule type" value="Genomic_DNA"/>
</dbReference>
<dbReference type="EMBL" id="AP008207">
    <property type="protein sequence ID" value="BAF07198.1"/>
    <property type="molecule type" value="Genomic_DNA"/>
</dbReference>
<dbReference type="EMBL" id="AP014957">
    <property type="protein sequence ID" value="BAS76024.1"/>
    <property type="molecule type" value="Genomic_DNA"/>
</dbReference>
<dbReference type="EMBL" id="AK070978">
    <property type="protein sequence ID" value="BAG92240.1"/>
    <property type="molecule type" value="mRNA"/>
</dbReference>
<dbReference type="RefSeq" id="XP_015645306.1">
    <property type="nucleotide sequence ID" value="XM_015789820.1"/>
</dbReference>
<dbReference type="PaxDb" id="39947-Q942X0"/>
<dbReference type="EnsemblPlants" id="Os01t0929600-01">
    <property type="protein sequence ID" value="Os01t0929600-01"/>
    <property type="gene ID" value="Os01g0929600"/>
</dbReference>
<dbReference type="Gramene" id="Os01t0929600-01">
    <property type="protein sequence ID" value="Os01t0929600-01"/>
    <property type="gene ID" value="Os01g0929600"/>
</dbReference>
<dbReference type="KEGG" id="dosa:Os01g0929600"/>
<dbReference type="HOGENOM" id="CLU_2417020_0_0_1"/>
<dbReference type="InParanoid" id="Q942X0"/>
<dbReference type="OMA" id="KVTSCML"/>
<dbReference type="OrthoDB" id="667692at2759"/>
<dbReference type="Proteomes" id="UP000000763">
    <property type="component" value="Chromosome 1"/>
</dbReference>
<dbReference type="Proteomes" id="UP000059680">
    <property type="component" value="Chromosome 1"/>
</dbReference>
<name>RTS_ORYSJ</name>
<feature type="signal peptide" evidence="2">
    <location>
        <begin position="1"/>
        <end position="21"/>
    </location>
</feature>
<feature type="chain" id="PRO_5007212742" description="Anther-specific protein RTS">
    <location>
        <begin position="22"/>
        <end position="91"/>
    </location>
</feature>
<accession>Q942X0</accession>
<gene>
    <name evidence="3" type="primary">RTS</name>
    <name evidence="6" type="ordered locus">Os01g0929600</name>
    <name evidence="3" type="ordered locus">LOC_Os01g70440</name>
    <name evidence="5" type="ORF">OSJNBa0052O12.23</name>
    <name evidence="4" type="ORF">P0506E04.1</name>
</gene>
<comment type="function">
    <text evidence="1">Required for tapetum and pollen development.</text>
</comment>
<keyword id="KW-0217">Developmental protein</keyword>
<keyword id="KW-1185">Reference proteome</keyword>
<keyword id="KW-0732">Signal</keyword>
<organism>
    <name type="scientific">Oryza sativa subsp. japonica</name>
    <name type="common">Rice</name>
    <dbReference type="NCBI Taxonomy" id="39947"/>
    <lineage>
        <taxon>Eukaryota</taxon>
        <taxon>Viridiplantae</taxon>
        <taxon>Streptophyta</taxon>
        <taxon>Embryophyta</taxon>
        <taxon>Tracheophyta</taxon>
        <taxon>Spermatophyta</taxon>
        <taxon>Magnoliopsida</taxon>
        <taxon>Liliopsida</taxon>
        <taxon>Poales</taxon>
        <taxon>Poaceae</taxon>
        <taxon>BOP clade</taxon>
        <taxon>Oryzoideae</taxon>
        <taxon>Oryzeae</taxon>
        <taxon>Oryzinae</taxon>
        <taxon>Oryza</taxon>
        <taxon>Oryza sativa</taxon>
    </lineage>
</organism>